<keyword id="KW-0046">Antibiotic resistance</keyword>
<keyword id="KW-0093">Biotin biosynthesis</keyword>
<keyword id="KW-0275">Fatty acid biosynthesis</keyword>
<keyword id="KW-0276">Fatty acid metabolism</keyword>
<keyword id="KW-0444">Lipid biosynthesis</keyword>
<keyword id="KW-0443">Lipid metabolism</keyword>
<keyword id="KW-0520">NAD</keyword>
<keyword id="KW-0560">Oxidoreductase</keyword>
<keyword id="KW-1185">Reference proteome</keyword>
<gene>
    <name type="primary">fabI</name>
    <name type="ordered locus">SF1293</name>
    <name type="ordered locus">S1375</name>
</gene>
<feature type="initiator methionine" description="Removed" evidence="1">
    <location>
        <position position="1"/>
    </location>
</feature>
<feature type="chain" id="PRO_0000054911" description="Enoyl-[acyl-carrier-protein] reductase [NADH] FabI">
    <location>
        <begin position="2"/>
        <end position="262"/>
    </location>
</feature>
<feature type="active site" description="Proton acceptor" evidence="1">
    <location>
        <position position="146"/>
    </location>
</feature>
<feature type="active site" description="Proton acceptor" evidence="1">
    <location>
        <position position="156"/>
    </location>
</feature>
<feature type="binding site" evidence="1">
    <location>
        <position position="13"/>
    </location>
    <ligand>
        <name>NAD(+)</name>
        <dbReference type="ChEBI" id="CHEBI:57540"/>
    </ligand>
</feature>
<feature type="binding site" evidence="1">
    <location>
        <begin position="19"/>
        <end position="20"/>
    </location>
    <ligand>
        <name>NAD(+)</name>
        <dbReference type="ChEBI" id="CHEBI:57540"/>
    </ligand>
</feature>
<feature type="binding site" evidence="1">
    <location>
        <position position="40"/>
    </location>
    <ligand>
        <name>NAD(+)</name>
        <dbReference type="ChEBI" id="CHEBI:57540"/>
    </ligand>
</feature>
<feature type="binding site" evidence="1">
    <location>
        <begin position="64"/>
        <end position="65"/>
    </location>
    <ligand>
        <name>NAD(+)</name>
        <dbReference type="ChEBI" id="CHEBI:57540"/>
    </ligand>
</feature>
<feature type="binding site" evidence="1">
    <location>
        <position position="92"/>
    </location>
    <ligand>
        <name>NAD(+)</name>
        <dbReference type="ChEBI" id="CHEBI:57540"/>
    </ligand>
</feature>
<feature type="binding site" evidence="1">
    <location>
        <position position="95"/>
    </location>
    <ligand>
        <name>substrate</name>
    </ligand>
</feature>
<feature type="binding site" evidence="1">
    <location>
        <position position="163"/>
    </location>
    <ligand>
        <name>NAD(+)</name>
        <dbReference type="ChEBI" id="CHEBI:57540"/>
    </ligand>
</feature>
<feature type="binding site" evidence="1">
    <location>
        <begin position="192"/>
        <end position="196"/>
    </location>
    <ligand>
        <name>NAD(+)</name>
        <dbReference type="ChEBI" id="CHEBI:57540"/>
    </ligand>
</feature>
<feature type="site" description="Involved in acyl-ACP binding" evidence="1">
    <location>
        <position position="201"/>
    </location>
</feature>
<feature type="site" description="Involved in acyl-ACP binding" evidence="1">
    <location>
        <position position="204"/>
    </location>
</feature>
<feature type="site" description="Involved in acyl-ACP binding" evidence="1">
    <location>
        <position position="205"/>
    </location>
</feature>
<protein>
    <recommendedName>
        <fullName>Enoyl-[acyl-carrier-protein] reductase [NADH] FabI</fullName>
        <shortName>ENR</shortName>
        <ecNumber>1.3.1.9</ecNumber>
    </recommendedName>
    <alternativeName>
        <fullName>NADH-dependent enoyl-ACP reductase</fullName>
    </alternativeName>
</protein>
<dbReference type="EC" id="1.3.1.9"/>
<dbReference type="EMBL" id="AE005674">
    <property type="protein sequence ID" value="AAN42904.1"/>
    <property type="molecule type" value="Genomic_DNA"/>
</dbReference>
<dbReference type="EMBL" id="AE014073">
    <property type="protein sequence ID" value="AAP16787.1"/>
    <property type="molecule type" value="Genomic_DNA"/>
</dbReference>
<dbReference type="RefSeq" id="NP_707197.1">
    <property type="nucleotide sequence ID" value="NC_004337.2"/>
</dbReference>
<dbReference type="RefSeq" id="WP_000506490.1">
    <property type="nucleotide sequence ID" value="NZ_WPGW01000009.1"/>
</dbReference>
<dbReference type="SMR" id="P0AEK6"/>
<dbReference type="STRING" id="198214.SF1293"/>
<dbReference type="PaxDb" id="198214-SF1293"/>
<dbReference type="GeneID" id="1024254"/>
<dbReference type="GeneID" id="93775413"/>
<dbReference type="KEGG" id="sfl:SF1293"/>
<dbReference type="KEGG" id="sfx:S1375"/>
<dbReference type="PATRIC" id="fig|198214.7.peg.1518"/>
<dbReference type="HOGENOM" id="CLU_010194_10_1_6"/>
<dbReference type="UniPathway" id="UPA00078"/>
<dbReference type="UniPathway" id="UPA00094"/>
<dbReference type="Proteomes" id="UP000001006">
    <property type="component" value="Chromosome"/>
</dbReference>
<dbReference type="Proteomes" id="UP000002673">
    <property type="component" value="Chromosome"/>
</dbReference>
<dbReference type="GO" id="GO:0004318">
    <property type="term" value="F:enoyl-[acyl-carrier-protein] reductase (NADH) activity"/>
    <property type="evidence" value="ECO:0000250"/>
    <property type="project" value="UniProtKB"/>
</dbReference>
<dbReference type="GO" id="GO:0042802">
    <property type="term" value="F:identical protein binding"/>
    <property type="evidence" value="ECO:0000250"/>
    <property type="project" value="UniProtKB"/>
</dbReference>
<dbReference type="GO" id="GO:0009102">
    <property type="term" value="P:biotin biosynthetic process"/>
    <property type="evidence" value="ECO:0000250"/>
    <property type="project" value="UniProtKB"/>
</dbReference>
<dbReference type="GO" id="GO:0030497">
    <property type="term" value="P:fatty acid elongation"/>
    <property type="evidence" value="ECO:0000250"/>
    <property type="project" value="UniProtKB"/>
</dbReference>
<dbReference type="GO" id="GO:0046677">
    <property type="term" value="P:response to antibiotic"/>
    <property type="evidence" value="ECO:0007669"/>
    <property type="project" value="UniProtKB-KW"/>
</dbReference>
<dbReference type="CDD" id="cd05372">
    <property type="entry name" value="ENR_SDR"/>
    <property type="match status" value="1"/>
</dbReference>
<dbReference type="FunFam" id="1.10.8.400:FF:000001">
    <property type="entry name" value="Enoyl-[acyl-carrier-protein] reductase [NADH]"/>
    <property type="match status" value="1"/>
</dbReference>
<dbReference type="FunFam" id="3.40.50.720:FF:000054">
    <property type="entry name" value="Enoyl-[acyl-carrier-protein] reductase [NADH]"/>
    <property type="match status" value="1"/>
</dbReference>
<dbReference type="Gene3D" id="3.40.50.720">
    <property type="entry name" value="NAD(P)-binding Rossmann-like Domain"/>
    <property type="match status" value="1"/>
</dbReference>
<dbReference type="InterPro" id="IPR014358">
    <property type="entry name" value="Enoyl-ACP_Rdtase_NADH"/>
</dbReference>
<dbReference type="InterPro" id="IPR036291">
    <property type="entry name" value="NAD(P)-bd_dom_sf"/>
</dbReference>
<dbReference type="InterPro" id="IPR002347">
    <property type="entry name" value="SDR_fam"/>
</dbReference>
<dbReference type="NCBIfam" id="NF005938">
    <property type="entry name" value="PRK07984.1"/>
    <property type="match status" value="1"/>
</dbReference>
<dbReference type="PANTHER" id="PTHR43159">
    <property type="entry name" value="ENOYL-[ACYL-CARRIER-PROTEIN] REDUCTASE"/>
    <property type="match status" value="1"/>
</dbReference>
<dbReference type="PANTHER" id="PTHR43159:SF2">
    <property type="entry name" value="ENOYL-[ACYL-CARRIER-PROTEIN] REDUCTASE [NADH], CHLOROPLASTIC"/>
    <property type="match status" value="1"/>
</dbReference>
<dbReference type="Pfam" id="PF13561">
    <property type="entry name" value="adh_short_C2"/>
    <property type="match status" value="1"/>
</dbReference>
<dbReference type="PIRSF" id="PIRSF000094">
    <property type="entry name" value="Enoyl-ACP_rdct"/>
    <property type="match status" value="1"/>
</dbReference>
<dbReference type="PRINTS" id="PR00081">
    <property type="entry name" value="GDHRDH"/>
</dbReference>
<dbReference type="SUPFAM" id="SSF51735">
    <property type="entry name" value="NAD(P)-binding Rossmann-fold domains"/>
    <property type="match status" value="1"/>
</dbReference>
<accession>P0AEK6</accession>
<accession>P29132</accession>
<sequence>MGFLSGKRILVTGVASKLSIAYGIAQAMHREGAELAFTYQNDKLKGRVEEFAAQLGSDIVLQCDVAEDASIDTMFAELGKVWPKFDGFVHSIGFAPGDQLDGDYVNAVTREGFKIAHDISSYSFVAMAKACRSMLNPGSALLTLSYLGAERAIPNYNVMGLAKASLEANVRYMANAMGPEGVRVNAISAGPIRTLAASGIKDFRKMLAHCEAVTPIRRTVTIEDVGNSAAFLCSDLSAGISGEVVHVDGGFSIAAMNELELK</sequence>
<organism>
    <name type="scientific">Shigella flexneri</name>
    <dbReference type="NCBI Taxonomy" id="623"/>
    <lineage>
        <taxon>Bacteria</taxon>
        <taxon>Pseudomonadati</taxon>
        <taxon>Pseudomonadota</taxon>
        <taxon>Gammaproteobacteria</taxon>
        <taxon>Enterobacterales</taxon>
        <taxon>Enterobacteriaceae</taxon>
        <taxon>Shigella</taxon>
    </lineage>
</organism>
<proteinExistence type="inferred from homology"/>
<evidence type="ECO:0000250" key="1"/>
<evidence type="ECO:0000305" key="2"/>
<comment type="function">
    <text evidence="1">Catalyzes the reduction of a carbon-carbon double bond in an enoyl moiety that is covalently linked to an acyl carrier protein (ACP). Involved in the elongation cycle of fatty acid which are used in the lipid metabolism and in the biotin biosynthesis (By similarity).</text>
</comment>
<comment type="catalytic activity">
    <reaction>
        <text>a 2,3-saturated acyl-[ACP] + NAD(+) = a (2E)-enoyl-[ACP] + NADH + H(+)</text>
        <dbReference type="Rhea" id="RHEA:10240"/>
        <dbReference type="Rhea" id="RHEA-COMP:9925"/>
        <dbReference type="Rhea" id="RHEA-COMP:9926"/>
        <dbReference type="ChEBI" id="CHEBI:15378"/>
        <dbReference type="ChEBI" id="CHEBI:57540"/>
        <dbReference type="ChEBI" id="CHEBI:57945"/>
        <dbReference type="ChEBI" id="CHEBI:78784"/>
        <dbReference type="ChEBI" id="CHEBI:78785"/>
        <dbReference type="EC" id="1.3.1.9"/>
    </reaction>
</comment>
<comment type="pathway">
    <text>Lipid metabolism; fatty acid biosynthesis.</text>
</comment>
<comment type="pathway">
    <text>Cofactor biosynthesis; biotin biosynthesis.</text>
</comment>
<comment type="subunit">
    <text evidence="1">Homotetramer.</text>
</comment>
<comment type="miscellaneous">
    <text evidence="1">The antibiotic diazaborine interferes with the activity by binding to the protein.</text>
</comment>
<comment type="similarity">
    <text evidence="2">Belongs to the short-chain dehydrogenases/reductases (SDR) family. FabI subfamily.</text>
</comment>
<reference key="1">
    <citation type="journal article" date="2002" name="Nucleic Acids Res.">
        <title>Genome sequence of Shigella flexneri 2a: insights into pathogenicity through comparison with genomes of Escherichia coli K12 and O157.</title>
        <authorList>
            <person name="Jin Q."/>
            <person name="Yuan Z."/>
            <person name="Xu J."/>
            <person name="Wang Y."/>
            <person name="Shen Y."/>
            <person name="Lu W."/>
            <person name="Wang J."/>
            <person name="Liu H."/>
            <person name="Yang J."/>
            <person name="Yang F."/>
            <person name="Zhang X."/>
            <person name="Zhang J."/>
            <person name="Yang G."/>
            <person name="Wu H."/>
            <person name="Qu D."/>
            <person name="Dong J."/>
            <person name="Sun L."/>
            <person name="Xue Y."/>
            <person name="Zhao A."/>
            <person name="Gao Y."/>
            <person name="Zhu J."/>
            <person name="Kan B."/>
            <person name="Ding K."/>
            <person name="Chen S."/>
            <person name="Cheng H."/>
            <person name="Yao Z."/>
            <person name="He B."/>
            <person name="Chen R."/>
            <person name="Ma D."/>
            <person name="Qiang B."/>
            <person name="Wen Y."/>
            <person name="Hou Y."/>
            <person name="Yu J."/>
        </authorList>
    </citation>
    <scope>NUCLEOTIDE SEQUENCE [LARGE SCALE GENOMIC DNA]</scope>
    <source>
        <strain>301 / Serotype 2a</strain>
    </source>
</reference>
<reference key="2">
    <citation type="journal article" date="2003" name="Infect. Immun.">
        <title>Complete genome sequence and comparative genomics of Shigella flexneri serotype 2a strain 2457T.</title>
        <authorList>
            <person name="Wei J."/>
            <person name="Goldberg M.B."/>
            <person name="Burland V."/>
            <person name="Venkatesan M.M."/>
            <person name="Deng W."/>
            <person name="Fournier G."/>
            <person name="Mayhew G.F."/>
            <person name="Plunkett G. III"/>
            <person name="Rose D.J."/>
            <person name="Darling A."/>
            <person name="Mau B."/>
            <person name="Perna N.T."/>
            <person name="Payne S.M."/>
            <person name="Runyen-Janecky L.J."/>
            <person name="Zhou S."/>
            <person name="Schwartz D.C."/>
            <person name="Blattner F.R."/>
        </authorList>
    </citation>
    <scope>NUCLEOTIDE SEQUENCE [LARGE SCALE GENOMIC DNA]</scope>
    <source>
        <strain>ATCC 700930 / 2457T / Serotype 2a</strain>
    </source>
</reference>
<name>FABI_SHIFL</name>